<protein>
    <recommendedName>
        <fullName evidence="1">6-phospho-beta-galactosidase</fullName>
        <ecNumber evidence="1">3.2.1.85</ecNumber>
    </recommendedName>
    <alternativeName>
        <fullName evidence="1">Beta-D-phosphogalactoside galactohydrolase</fullName>
        <shortName evidence="1">PGALase</shortName>
    </alternativeName>
    <alternativeName>
        <fullName evidence="1">P-beta-Gal</fullName>
        <shortName evidence="1">PBG</shortName>
    </alternativeName>
</protein>
<sequence>MTKTLPKDFIFGGATAAYQAEGATHTDGKGPVAWDKYLEDNYWYTAEPASDFYNRYPVDLKLSEEFGVNGIRISIAWSRIFPTGKGEVNPKGVEYYHNLFAECHKRHVEPFVTLHHFDTPEALHSNGDFLNRENIEHFVNYAELCFKEFSEVNYWTTFNEIGPIGDGQYLVGKFPPGIQYDLAKVFQSHHNMMVSHARAVKLFKDSGYSGEIGVVHALPTKYPFDANNPDDVRAAELEDIIHNKFILDATYLGKYSDKTMEGVNHILEVNGGELDLREEDFAALDAAKDLNDFLGINYYMSDWMQAFDGETEIIHNGKGEKGSSKYQIKGVGRRKAPVDVPKTDWDWIIFPQGLYDQIMRVKADYPNYKKIYITENGLGYKDEFVDNTVYDDGRIDYVKKHLEVISDAISDGANVKGYFMWSLMDVFSWSNGYEKRYGLFYVDFETQERYPKKSAYWYKKVAETQVIE</sequence>
<gene>
    <name evidence="1" type="primary">lacG</name>
    <name type="ordered locus">MGAS2096_Spy1657</name>
</gene>
<reference key="1">
    <citation type="journal article" date="2006" name="Proc. Natl. Acad. Sci. U.S.A.">
        <title>Molecular genetic anatomy of inter- and intraserotype variation in the human bacterial pathogen group A Streptococcus.</title>
        <authorList>
            <person name="Beres S.B."/>
            <person name="Richter E.W."/>
            <person name="Nagiec M.J."/>
            <person name="Sumby P."/>
            <person name="Porcella S.F."/>
            <person name="DeLeo F.R."/>
            <person name="Musser J.M."/>
        </authorList>
    </citation>
    <scope>NUCLEOTIDE SEQUENCE [LARGE SCALE GENOMIC DNA]</scope>
    <source>
        <strain>MGAS2096</strain>
    </source>
</reference>
<keyword id="KW-0326">Glycosidase</keyword>
<keyword id="KW-0378">Hydrolase</keyword>
<accession>Q1J9V2</accession>
<organism>
    <name type="scientific">Streptococcus pyogenes serotype M12 (strain MGAS2096)</name>
    <dbReference type="NCBI Taxonomy" id="370553"/>
    <lineage>
        <taxon>Bacteria</taxon>
        <taxon>Bacillati</taxon>
        <taxon>Bacillota</taxon>
        <taxon>Bacilli</taxon>
        <taxon>Lactobacillales</taxon>
        <taxon>Streptococcaceae</taxon>
        <taxon>Streptococcus</taxon>
    </lineage>
</organism>
<proteinExistence type="inferred from homology"/>
<feature type="chain" id="PRO_0000260735" description="6-phospho-beta-galactosidase">
    <location>
        <begin position="1"/>
        <end position="468"/>
    </location>
</feature>
<feature type="active site" description="Proton donor" evidence="1">
    <location>
        <position position="160"/>
    </location>
</feature>
<feature type="active site" description="Nucleophile" evidence="1">
    <location>
        <position position="375"/>
    </location>
</feature>
<feature type="binding site" evidence="1">
    <location>
        <position position="19"/>
    </location>
    <ligand>
        <name>D-galactose 6-phosphate</name>
        <dbReference type="ChEBI" id="CHEBI:91004"/>
    </ligand>
</feature>
<feature type="binding site" evidence="1">
    <location>
        <position position="116"/>
    </location>
    <ligand>
        <name>D-galactose 6-phosphate</name>
        <dbReference type="ChEBI" id="CHEBI:91004"/>
    </ligand>
</feature>
<feature type="binding site" evidence="1">
    <location>
        <position position="159"/>
    </location>
    <ligand>
        <name>D-galactose 6-phosphate</name>
        <dbReference type="ChEBI" id="CHEBI:91004"/>
    </ligand>
</feature>
<feature type="binding site" evidence="1">
    <location>
        <position position="160"/>
    </location>
    <ligand>
        <name>D-galactose 6-phosphate</name>
        <dbReference type="ChEBI" id="CHEBI:91004"/>
    </ligand>
</feature>
<feature type="binding site" evidence="1">
    <location>
        <position position="297"/>
    </location>
    <ligand>
        <name>D-galactose 6-phosphate</name>
        <dbReference type="ChEBI" id="CHEBI:91004"/>
    </ligand>
</feature>
<feature type="binding site" evidence="1">
    <location>
        <position position="428"/>
    </location>
    <ligand>
        <name>D-galactose 6-phosphate</name>
        <dbReference type="ChEBI" id="CHEBI:91004"/>
    </ligand>
</feature>
<feature type="binding site" evidence="1">
    <location>
        <position position="429"/>
    </location>
    <ligand>
        <name>D-galactose 6-phosphate</name>
        <dbReference type="ChEBI" id="CHEBI:91004"/>
    </ligand>
</feature>
<feature type="binding site" evidence="1">
    <location>
        <position position="435"/>
    </location>
    <ligand>
        <name>D-galactose 6-phosphate</name>
        <dbReference type="ChEBI" id="CHEBI:91004"/>
    </ligand>
</feature>
<feature type="binding site" evidence="1">
    <location>
        <position position="437"/>
    </location>
    <ligand>
        <name>D-galactose 6-phosphate</name>
        <dbReference type="ChEBI" id="CHEBI:91004"/>
    </ligand>
</feature>
<dbReference type="EC" id="3.2.1.85" evidence="1"/>
<dbReference type="EMBL" id="CP000261">
    <property type="protein sequence ID" value="ABF36709.1"/>
    <property type="molecule type" value="Genomic_DNA"/>
</dbReference>
<dbReference type="SMR" id="Q1J9V2"/>
<dbReference type="CAZy" id="GH1">
    <property type="family name" value="Glycoside Hydrolase Family 1"/>
</dbReference>
<dbReference type="KEGG" id="spj:MGAS2096_Spy1657"/>
<dbReference type="HOGENOM" id="CLU_001859_1_3_9"/>
<dbReference type="UniPathway" id="UPA00542">
    <property type="reaction ID" value="UER00605"/>
</dbReference>
<dbReference type="GO" id="GO:0005829">
    <property type="term" value="C:cytosol"/>
    <property type="evidence" value="ECO:0007669"/>
    <property type="project" value="TreeGrafter"/>
</dbReference>
<dbReference type="GO" id="GO:0033920">
    <property type="term" value="F:6-phospho-beta-galactosidase activity"/>
    <property type="evidence" value="ECO:0007669"/>
    <property type="project" value="UniProtKB-UniRule"/>
</dbReference>
<dbReference type="GO" id="GO:0008422">
    <property type="term" value="F:beta-glucosidase activity"/>
    <property type="evidence" value="ECO:0007669"/>
    <property type="project" value="TreeGrafter"/>
</dbReference>
<dbReference type="GO" id="GO:0019512">
    <property type="term" value="P:lactose catabolic process via tagatose-6-phosphate"/>
    <property type="evidence" value="ECO:0007669"/>
    <property type="project" value="InterPro"/>
</dbReference>
<dbReference type="FunFam" id="3.20.20.80:FF:000004">
    <property type="entry name" value="Beta-glucosidase 6-phospho-beta-glucosidase"/>
    <property type="match status" value="1"/>
</dbReference>
<dbReference type="Gene3D" id="3.20.20.80">
    <property type="entry name" value="Glycosidases"/>
    <property type="match status" value="1"/>
</dbReference>
<dbReference type="HAMAP" id="MF_01574">
    <property type="entry name" value="LacG"/>
    <property type="match status" value="1"/>
</dbReference>
<dbReference type="InterPro" id="IPR005928">
    <property type="entry name" value="6P-beta-galactosidase"/>
</dbReference>
<dbReference type="InterPro" id="IPR001360">
    <property type="entry name" value="Glyco_hydro_1"/>
</dbReference>
<dbReference type="InterPro" id="IPR018120">
    <property type="entry name" value="Glyco_hydro_1_AS"/>
</dbReference>
<dbReference type="InterPro" id="IPR033132">
    <property type="entry name" value="Glyco_hydro_1_N_CS"/>
</dbReference>
<dbReference type="InterPro" id="IPR017853">
    <property type="entry name" value="Glycoside_hydrolase_SF"/>
</dbReference>
<dbReference type="NCBIfam" id="TIGR01233">
    <property type="entry name" value="lacG"/>
    <property type="match status" value="1"/>
</dbReference>
<dbReference type="NCBIfam" id="NF010036">
    <property type="entry name" value="PRK13511.1"/>
    <property type="match status" value="1"/>
</dbReference>
<dbReference type="PANTHER" id="PTHR10353">
    <property type="entry name" value="GLYCOSYL HYDROLASE"/>
    <property type="match status" value="1"/>
</dbReference>
<dbReference type="PANTHER" id="PTHR10353:SF36">
    <property type="entry name" value="LP05116P"/>
    <property type="match status" value="1"/>
</dbReference>
<dbReference type="Pfam" id="PF00232">
    <property type="entry name" value="Glyco_hydro_1"/>
    <property type="match status" value="1"/>
</dbReference>
<dbReference type="PRINTS" id="PR00131">
    <property type="entry name" value="GLHYDRLASE1"/>
</dbReference>
<dbReference type="SUPFAM" id="SSF51445">
    <property type="entry name" value="(Trans)glycosidases"/>
    <property type="match status" value="1"/>
</dbReference>
<dbReference type="PROSITE" id="PS00572">
    <property type="entry name" value="GLYCOSYL_HYDROL_F1_1"/>
    <property type="match status" value="1"/>
</dbReference>
<dbReference type="PROSITE" id="PS00653">
    <property type="entry name" value="GLYCOSYL_HYDROL_F1_2"/>
    <property type="match status" value="1"/>
</dbReference>
<evidence type="ECO:0000255" key="1">
    <source>
        <dbReference type="HAMAP-Rule" id="MF_01574"/>
    </source>
</evidence>
<comment type="catalytic activity">
    <reaction evidence="1">
        <text>a 6-phospho-beta-D-galactoside + H2O = D-galactose 6-phosphate + an alcohol</text>
        <dbReference type="Rhea" id="RHEA:24568"/>
        <dbReference type="ChEBI" id="CHEBI:15377"/>
        <dbReference type="ChEBI" id="CHEBI:30879"/>
        <dbReference type="ChEBI" id="CHEBI:58534"/>
        <dbReference type="ChEBI" id="CHEBI:91004"/>
        <dbReference type="EC" id="3.2.1.85"/>
    </reaction>
</comment>
<comment type="pathway">
    <text evidence="1">Carbohydrate metabolism; lactose degradation; D-galactose 6-phosphate and beta-D-glucose from lactose 6-phosphate: step 1/1.</text>
</comment>
<comment type="similarity">
    <text evidence="1">Belongs to the glycosyl hydrolase 1 family.</text>
</comment>
<name>LACG_STRPB</name>